<proteinExistence type="inferred from homology"/>
<accession>Q2JTZ8</accession>
<evidence type="ECO:0000255" key="1">
    <source>
        <dbReference type="HAMAP-Rule" id="MF_00074"/>
    </source>
</evidence>
<dbReference type="EC" id="2.1.1.-" evidence="1"/>
<dbReference type="EMBL" id="CP000239">
    <property type="protein sequence ID" value="ABC99831.1"/>
    <property type="molecule type" value="Genomic_DNA"/>
</dbReference>
<dbReference type="SMR" id="Q2JTZ8"/>
<dbReference type="STRING" id="321327.CYA_1675"/>
<dbReference type="KEGG" id="cya:CYA_1675"/>
<dbReference type="eggNOG" id="COG0357">
    <property type="taxonomic scope" value="Bacteria"/>
</dbReference>
<dbReference type="HOGENOM" id="CLU_065341_0_2_3"/>
<dbReference type="OrthoDB" id="9808773at2"/>
<dbReference type="Proteomes" id="UP000008818">
    <property type="component" value="Chromosome"/>
</dbReference>
<dbReference type="GO" id="GO:0005829">
    <property type="term" value="C:cytosol"/>
    <property type="evidence" value="ECO:0007669"/>
    <property type="project" value="TreeGrafter"/>
</dbReference>
<dbReference type="GO" id="GO:0070043">
    <property type="term" value="F:rRNA (guanine-N7-)-methyltransferase activity"/>
    <property type="evidence" value="ECO:0007669"/>
    <property type="project" value="UniProtKB-UniRule"/>
</dbReference>
<dbReference type="FunFam" id="3.40.50.150:FF:000041">
    <property type="entry name" value="Ribosomal RNA small subunit methyltransferase G"/>
    <property type="match status" value="1"/>
</dbReference>
<dbReference type="Gene3D" id="3.40.50.150">
    <property type="entry name" value="Vaccinia Virus protein VP39"/>
    <property type="match status" value="1"/>
</dbReference>
<dbReference type="HAMAP" id="MF_00074">
    <property type="entry name" value="16SrRNA_methyltr_G"/>
    <property type="match status" value="1"/>
</dbReference>
<dbReference type="InterPro" id="IPR003682">
    <property type="entry name" value="rRNA_ssu_MeTfrase_G"/>
</dbReference>
<dbReference type="InterPro" id="IPR029063">
    <property type="entry name" value="SAM-dependent_MTases_sf"/>
</dbReference>
<dbReference type="NCBIfam" id="TIGR00138">
    <property type="entry name" value="rsmG_gidB"/>
    <property type="match status" value="1"/>
</dbReference>
<dbReference type="PANTHER" id="PTHR31760">
    <property type="entry name" value="S-ADENOSYL-L-METHIONINE-DEPENDENT METHYLTRANSFERASES SUPERFAMILY PROTEIN"/>
    <property type="match status" value="1"/>
</dbReference>
<dbReference type="PANTHER" id="PTHR31760:SF0">
    <property type="entry name" value="S-ADENOSYL-L-METHIONINE-DEPENDENT METHYLTRANSFERASES SUPERFAMILY PROTEIN"/>
    <property type="match status" value="1"/>
</dbReference>
<dbReference type="Pfam" id="PF02527">
    <property type="entry name" value="GidB"/>
    <property type="match status" value="1"/>
</dbReference>
<dbReference type="PIRSF" id="PIRSF003078">
    <property type="entry name" value="GidB"/>
    <property type="match status" value="1"/>
</dbReference>
<dbReference type="SUPFAM" id="SSF53335">
    <property type="entry name" value="S-adenosyl-L-methionine-dependent methyltransferases"/>
    <property type="match status" value="1"/>
</dbReference>
<protein>
    <recommendedName>
        <fullName evidence="1">Ribosomal RNA small subunit methyltransferase G</fullName>
        <ecNumber evidence="1">2.1.1.-</ecNumber>
    </recommendedName>
    <alternativeName>
        <fullName evidence="1">16S rRNA 7-methylguanosine methyltransferase</fullName>
        <shortName evidence="1">16S rRNA m7G methyltransferase</shortName>
    </alternativeName>
</protein>
<feature type="chain" id="PRO_0000335440" description="Ribosomal RNA small subunit methyltransferase G">
    <location>
        <begin position="1"/>
        <end position="260"/>
    </location>
</feature>
<feature type="binding site" evidence="1">
    <location>
        <position position="94"/>
    </location>
    <ligand>
        <name>S-adenosyl-L-methionine</name>
        <dbReference type="ChEBI" id="CHEBI:59789"/>
    </ligand>
</feature>
<feature type="binding site" evidence="1">
    <location>
        <position position="99"/>
    </location>
    <ligand>
        <name>S-adenosyl-L-methionine</name>
        <dbReference type="ChEBI" id="CHEBI:59789"/>
    </ligand>
</feature>
<feature type="binding site" evidence="1">
    <location>
        <begin position="117"/>
        <end position="119"/>
    </location>
    <ligand>
        <name>S-adenosyl-L-methionine</name>
        <dbReference type="ChEBI" id="CHEBI:59789"/>
    </ligand>
</feature>
<feature type="binding site" evidence="1">
    <location>
        <begin position="145"/>
        <end position="146"/>
    </location>
    <ligand>
        <name>S-adenosyl-L-methionine</name>
        <dbReference type="ChEBI" id="CHEBI:59789"/>
    </ligand>
</feature>
<feature type="binding site" evidence="1">
    <location>
        <position position="164"/>
    </location>
    <ligand>
        <name>S-adenosyl-L-methionine</name>
        <dbReference type="ChEBI" id="CHEBI:59789"/>
    </ligand>
</feature>
<sequence length="260" mass="29021">MKKADPPASEPPELEALWSSWLVDLGWQPSEPQQQQLQQLYSLVMAGNRTQNLTRITDPIDFWEKHLWDSLRGLRLLGSWDEIQAQPWRGIDIGTGAGFPGIPAQIALPQAHFTLLDSSQRKIAFVQEVLQQLSLAQARAVAQRAEIWGQDPQERGSYDLALARAVAAAEICAEYCLPLLKVGGRAILYRGHWTEAEAQTLKRALSLLGGKLIHVEAFTTPHSHGMRHCLLLEKVAPTPACYPRPPGIPKRQPLGQDKRR</sequence>
<comment type="function">
    <text evidence="1">Specifically methylates the N7 position of a guanine in 16S rRNA.</text>
</comment>
<comment type="subcellular location">
    <subcellularLocation>
        <location evidence="1">Cytoplasm</location>
    </subcellularLocation>
</comment>
<comment type="similarity">
    <text evidence="1">Belongs to the methyltransferase superfamily. RNA methyltransferase RsmG family.</text>
</comment>
<organism>
    <name type="scientific">Synechococcus sp. (strain JA-3-3Ab)</name>
    <name type="common">Cyanobacteria bacterium Yellowstone A-Prime</name>
    <dbReference type="NCBI Taxonomy" id="321327"/>
    <lineage>
        <taxon>Bacteria</taxon>
        <taxon>Bacillati</taxon>
        <taxon>Cyanobacteriota</taxon>
        <taxon>Cyanophyceae</taxon>
        <taxon>Synechococcales</taxon>
        <taxon>Synechococcaceae</taxon>
        <taxon>Synechococcus</taxon>
    </lineage>
</organism>
<reference key="1">
    <citation type="journal article" date="2007" name="ISME J.">
        <title>Population level functional diversity in a microbial community revealed by comparative genomic and metagenomic analyses.</title>
        <authorList>
            <person name="Bhaya D."/>
            <person name="Grossman A.R."/>
            <person name="Steunou A.-S."/>
            <person name="Khuri N."/>
            <person name="Cohan F.M."/>
            <person name="Hamamura N."/>
            <person name="Melendrez M.C."/>
            <person name="Bateson M.M."/>
            <person name="Ward D.M."/>
            <person name="Heidelberg J.F."/>
        </authorList>
    </citation>
    <scope>NUCLEOTIDE SEQUENCE [LARGE SCALE GENOMIC DNA]</scope>
    <source>
        <strain>JA-3-3Ab</strain>
    </source>
</reference>
<name>RSMG_SYNJA</name>
<keyword id="KW-0963">Cytoplasm</keyword>
<keyword id="KW-0489">Methyltransferase</keyword>
<keyword id="KW-0698">rRNA processing</keyword>
<keyword id="KW-0949">S-adenosyl-L-methionine</keyword>
<keyword id="KW-0808">Transferase</keyword>
<gene>
    <name evidence="1" type="primary">rsmG</name>
    <name type="ordered locus">CYA_1675</name>
</gene>